<sequence length="398" mass="41953">MAKLTVKDVDLKGKKVLVRVDFNVPLKDGVITNDNRITAALPTIKYIIEQGGRAILFSHLGRVKEEADKAGKSLAPVAADLAAKLGQDVVFPGVTRGAELEAAINALEDGQVLLVENTRYEDVDGKKESKNDPELGKYWASLGDGIFVNDAFGTAHRAHASNVGISANVEKAVAGFLLENEIAYIQEAVETPERPFVAILGGSKVSDKIGVIENLLEKADKVLIGGGMTYTFYKAQGIEIGNSLVEEDKLDVAKALLEKANGKLILPVDSKEANAFAGYTEVRDTEGEAVSEGFLGLDIGPKSIAKFDEALTGAKTVVWNGPMGVFENPDFQTGTIGVMDAIVKQPGVKSIIGGGDSAAAAINLGRADKFSWISTGGGASMELLEGKVLPGLAALTEK</sequence>
<protein>
    <recommendedName>
        <fullName evidence="1">Phosphoglycerate kinase</fullName>
        <ecNumber evidence="1">2.7.2.3</ecNumber>
    </recommendedName>
</protein>
<name>PGK_STRP7</name>
<proteinExistence type="inferred from homology"/>
<comment type="catalytic activity">
    <reaction evidence="1">
        <text>(2R)-3-phosphoglycerate + ATP = (2R)-3-phospho-glyceroyl phosphate + ADP</text>
        <dbReference type="Rhea" id="RHEA:14801"/>
        <dbReference type="ChEBI" id="CHEBI:30616"/>
        <dbReference type="ChEBI" id="CHEBI:57604"/>
        <dbReference type="ChEBI" id="CHEBI:58272"/>
        <dbReference type="ChEBI" id="CHEBI:456216"/>
        <dbReference type="EC" id="2.7.2.3"/>
    </reaction>
</comment>
<comment type="pathway">
    <text evidence="1">Carbohydrate degradation; glycolysis; pyruvate from D-glyceraldehyde 3-phosphate: step 2/5.</text>
</comment>
<comment type="subunit">
    <text evidence="1">Monomer.</text>
</comment>
<comment type="subcellular location">
    <subcellularLocation>
        <location evidence="1">Cytoplasm</location>
    </subcellularLocation>
</comment>
<comment type="similarity">
    <text evidence="1">Belongs to the phosphoglycerate kinase family.</text>
</comment>
<reference key="1">
    <citation type="journal article" date="2010" name="Genome Biol.">
        <title>Structure and dynamics of the pan-genome of Streptococcus pneumoniae and closely related species.</title>
        <authorList>
            <person name="Donati C."/>
            <person name="Hiller N.L."/>
            <person name="Tettelin H."/>
            <person name="Muzzi A."/>
            <person name="Croucher N.J."/>
            <person name="Angiuoli S.V."/>
            <person name="Oggioni M."/>
            <person name="Dunning Hotopp J.C."/>
            <person name="Hu F.Z."/>
            <person name="Riley D.R."/>
            <person name="Covacci A."/>
            <person name="Mitchell T.J."/>
            <person name="Bentley S.D."/>
            <person name="Kilian M."/>
            <person name="Ehrlich G.D."/>
            <person name="Rappuoli R."/>
            <person name="Moxon E.R."/>
            <person name="Masignani V."/>
        </authorList>
    </citation>
    <scope>NUCLEOTIDE SEQUENCE [LARGE SCALE GENOMIC DNA]</scope>
    <source>
        <strain>70585</strain>
    </source>
</reference>
<dbReference type="EC" id="2.7.2.3" evidence="1"/>
<dbReference type="EMBL" id="CP000918">
    <property type="protein sequence ID" value="ACO16932.1"/>
    <property type="molecule type" value="Genomic_DNA"/>
</dbReference>
<dbReference type="RefSeq" id="WP_001096745.1">
    <property type="nucleotide sequence ID" value="NC_012468.1"/>
</dbReference>
<dbReference type="SMR" id="C1C5M3"/>
<dbReference type="KEGG" id="snm:SP70585_0559"/>
<dbReference type="HOGENOM" id="CLU_025427_0_1_9"/>
<dbReference type="UniPathway" id="UPA00109">
    <property type="reaction ID" value="UER00185"/>
</dbReference>
<dbReference type="Proteomes" id="UP000002211">
    <property type="component" value="Chromosome"/>
</dbReference>
<dbReference type="GO" id="GO:0005829">
    <property type="term" value="C:cytosol"/>
    <property type="evidence" value="ECO:0007669"/>
    <property type="project" value="TreeGrafter"/>
</dbReference>
<dbReference type="GO" id="GO:0043531">
    <property type="term" value="F:ADP binding"/>
    <property type="evidence" value="ECO:0007669"/>
    <property type="project" value="TreeGrafter"/>
</dbReference>
<dbReference type="GO" id="GO:0005524">
    <property type="term" value="F:ATP binding"/>
    <property type="evidence" value="ECO:0007669"/>
    <property type="project" value="UniProtKB-KW"/>
</dbReference>
<dbReference type="GO" id="GO:0004618">
    <property type="term" value="F:phosphoglycerate kinase activity"/>
    <property type="evidence" value="ECO:0007669"/>
    <property type="project" value="UniProtKB-UniRule"/>
</dbReference>
<dbReference type="GO" id="GO:0006094">
    <property type="term" value="P:gluconeogenesis"/>
    <property type="evidence" value="ECO:0007669"/>
    <property type="project" value="TreeGrafter"/>
</dbReference>
<dbReference type="GO" id="GO:0006096">
    <property type="term" value="P:glycolytic process"/>
    <property type="evidence" value="ECO:0007669"/>
    <property type="project" value="UniProtKB-UniRule"/>
</dbReference>
<dbReference type="FunFam" id="3.40.50.1260:FF:000001">
    <property type="entry name" value="Phosphoglycerate kinase"/>
    <property type="match status" value="1"/>
</dbReference>
<dbReference type="FunFam" id="3.40.50.1260:FF:000008">
    <property type="entry name" value="Phosphoglycerate kinase"/>
    <property type="match status" value="1"/>
</dbReference>
<dbReference type="Gene3D" id="3.40.50.1260">
    <property type="entry name" value="Phosphoglycerate kinase, N-terminal domain"/>
    <property type="match status" value="2"/>
</dbReference>
<dbReference type="HAMAP" id="MF_00145">
    <property type="entry name" value="Phosphoglyc_kinase"/>
    <property type="match status" value="1"/>
</dbReference>
<dbReference type="InterPro" id="IPR001576">
    <property type="entry name" value="Phosphoglycerate_kinase"/>
</dbReference>
<dbReference type="InterPro" id="IPR015911">
    <property type="entry name" value="Phosphoglycerate_kinase_CS"/>
</dbReference>
<dbReference type="InterPro" id="IPR015824">
    <property type="entry name" value="Phosphoglycerate_kinase_N"/>
</dbReference>
<dbReference type="InterPro" id="IPR036043">
    <property type="entry name" value="Phosphoglycerate_kinase_sf"/>
</dbReference>
<dbReference type="PANTHER" id="PTHR11406">
    <property type="entry name" value="PHOSPHOGLYCERATE KINASE"/>
    <property type="match status" value="1"/>
</dbReference>
<dbReference type="PANTHER" id="PTHR11406:SF23">
    <property type="entry name" value="PHOSPHOGLYCERATE KINASE 1, CHLOROPLASTIC-RELATED"/>
    <property type="match status" value="1"/>
</dbReference>
<dbReference type="Pfam" id="PF00162">
    <property type="entry name" value="PGK"/>
    <property type="match status" value="1"/>
</dbReference>
<dbReference type="PIRSF" id="PIRSF000724">
    <property type="entry name" value="Pgk"/>
    <property type="match status" value="1"/>
</dbReference>
<dbReference type="PRINTS" id="PR00477">
    <property type="entry name" value="PHGLYCKINASE"/>
</dbReference>
<dbReference type="SUPFAM" id="SSF53748">
    <property type="entry name" value="Phosphoglycerate kinase"/>
    <property type="match status" value="1"/>
</dbReference>
<dbReference type="PROSITE" id="PS00111">
    <property type="entry name" value="PGLYCERATE_KINASE"/>
    <property type="match status" value="1"/>
</dbReference>
<organism>
    <name type="scientific">Streptococcus pneumoniae (strain 70585)</name>
    <dbReference type="NCBI Taxonomy" id="488221"/>
    <lineage>
        <taxon>Bacteria</taxon>
        <taxon>Bacillati</taxon>
        <taxon>Bacillota</taxon>
        <taxon>Bacilli</taxon>
        <taxon>Lactobacillales</taxon>
        <taxon>Streptococcaceae</taxon>
        <taxon>Streptococcus</taxon>
    </lineage>
</organism>
<evidence type="ECO:0000255" key="1">
    <source>
        <dbReference type="HAMAP-Rule" id="MF_00145"/>
    </source>
</evidence>
<gene>
    <name evidence="1" type="primary">pgk</name>
    <name type="ordered locus">SP70585_0559</name>
</gene>
<keyword id="KW-0067">ATP-binding</keyword>
<keyword id="KW-0963">Cytoplasm</keyword>
<keyword id="KW-0324">Glycolysis</keyword>
<keyword id="KW-0418">Kinase</keyword>
<keyword id="KW-0547">Nucleotide-binding</keyword>
<keyword id="KW-0808">Transferase</keyword>
<feature type="chain" id="PRO_1000192851" description="Phosphoglycerate kinase">
    <location>
        <begin position="1"/>
        <end position="398"/>
    </location>
</feature>
<feature type="binding site" evidence="1">
    <location>
        <begin position="21"/>
        <end position="23"/>
    </location>
    <ligand>
        <name>substrate</name>
    </ligand>
</feature>
<feature type="binding site" evidence="1">
    <location>
        <position position="36"/>
    </location>
    <ligand>
        <name>substrate</name>
    </ligand>
</feature>
<feature type="binding site" evidence="1">
    <location>
        <begin position="59"/>
        <end position="62"/>
    </location>
    <ligand>
        <name>substrate</name>
    </ligand>
</feature>
<feature type="binding site" evidence="1">
    <location>
        <position position="119"/>
    </location>
    <ligand>
        <name>substrate</name>
    </ligand>
</feature>
<feature type="binding site" evidence="1">
    <location>
        <position position="157"/>
    </location>
    <ligand>
        <name>substrate</name>
    </ligand>
</feature>
<feature type="binding site" evidence="1">
    <location>
        <position position="208"/>
    </location>
    <ligand>
        <name>ATP</name>
        <dbReference type="ChEBI" id="CHEBI:30616"/>
    </ligand>
</feature>
<feature type="binding site" evidence="1">
    <location>
        <position position="296"/>
    </location>
    <ligand>
        <name>ATP</name>
        <dbReference type="ChEBI" id="CHEBI:30616"/>
    </ligand>
</feature>
<feature type="binding site" evidence="1">
    <location>
        <position position="327"/>
    </location>
    <ligand>
        <name>ATP</name>
        <dbReference type="ChEBI" id="CHEBI:30616"/>
    </ligand>
</feature>
<feature type="binding site" evidence="1">
    <location>
        <begin position="354"/>
        <end position="357"/>
    </location>
    <ligand>
        <name>ATP</name>
        <dbReference type="ChEBI" id="CHEBI:30616"/>
    </ligand>
</feature>
<accession>C1C5M3</accession>